<comment type="function">
    <text evidence="1">Catalyzes the conversion of glucosamine-6-phosphate to glucosamine-1-phosphate.</text>
</comment>
<comment type="catalytic activity">
    <reaction evidence="1">
        <text>alpha-D-glucosamine 1-phosphate = D-glucosamine 6-phosphate</text>
        <dbReference type="Rhea" id="RHEA:23424"/>
        <dbReference type="ChEBI" id="CHEBI:58516"/>
        <dbReference type="ChEBI" id="CHEBI:58725"/>
        <dbReference type="EC" id="5.4.2.10"/>
    </reaction>
</comment>
<comment type="cofactor">
    <cofactor evidence="1">
        <name>Mg(2+)</name>
        <dbReference type="ChEBI" id="CHEBI:18420"/>
    </cofactor>
    <text evidence="1">Binds 1 Mg(2+) ion per subunit.</text>
</comment>
<comment type="PTM">
    <text evidence="1">Activated by phosphorylation.</text>
</comment>
<comment type="similarity">
    <text evidence="1">Belongs to the phosphohexose mutase family.</text>
</comment>
<sequence length="445" mass="48927">MKLFGTDGVRGKAGEFLDSFLAMRLAMAAGIYFKDKALTNNILVGKDTRRSGYMIENAIVSGLTSIGYNVIEIGPMPTPAIAFLTEDMRCDAGIMISASHNPYYDNGIKFFDAHGNKLDEQAEAKIEEIYFNDKLIEEARTTKSQIGQAKRIDDVIGRYIVSIKNSFPKELTLKSLRVVLDVAHGASYKVAPTVFRELGADVIVINDKPNGLNINENCGALHPLNLALEVKKFRADVGFAFDGDADRLVVVDEKGEVAHGDSLLGVLALFLKKQGKLKSSVVSTIMSNGALKEFLTKYKIPHETCNVGDKYVLEKLKECGGNFGGEQSGHIIFSDYAKTGDGLVAALQFSALMLSEAKSASEILNQVKPYPQLLHNLKISEKKDLSKLAGLEELKKDLEKKGIASLFRYSGTENLIRLLLEAKDIKLLEKEMKVVESFFMKVLNA</sequence>
<name>GLMM_CAMLR</name>
<protein>
    <recommendedName>
        <fullName evidence="1">Phosphoglucosamine mutase</fullName>
        <ecNumber evidence="1">5.4.2.10</ecNumber>
    </recommendedName>
</protein>
<evidence type="ECO:0000255" key="1">
    <source>
        <dbReference type="HAMAP-Rule" id="MF_01554"/>
    </source>
</evidence>
<keyword id="KW-0413">Isomerase</keyword>
<keyword id="KW-0460">Magnesium</keyword>
<keyword id="KW-0479">Metal-binding</keyword>
<keyword id="KW-0597">Phosphoprotein</keyword>
<keyword id="KW-1185">Reference proteome</keyword>
<proteinExistence type="inferred from homology"/>
<gene>
    <name evidence="1" type="primary">glmM</name>
    <name type="ordered locus">Cla_1567</name>
</gene>
<dbReference type="EC" id="5.4.2.10" evidence="1"/>
<dbReference type="EMBL" id="CP000932">
    <property type="protein sequence ID" value="ACM64866.1"/>
    <property type="molecule type" value="Genomic_DNA"/>
</dbReference>
<dbReference type="RefSeq" id="WP_012662248.1">
    <property type="nucleotide sequence ID" value="NC_012039.1"/>
</dbReference>
<dbReference type="RefSeq" id="WP_012662249.1">
    <property type="nucleotide sequence ID" value="NC_012039.1"/>
</dbReference>
<dbReference type="SMR" id="B9KE78"/>
<dbReference type="STRING" id="306263.Cla_1567"/>
<dbReference type="KEGG" id="cla:CLA_1567"/>
<dbReference type="PATRIC" id="fig|306263.5.peg.1545"/>
<dbReference type="eggNOG" id="COG1109">
    <property type="taxonomic scope" value="Bacteria"/>
</dbReference>
<dbReference type="HOGENOM" id="CLU_016950_7_0_7"/>
<dbReference type="Proteomes" id="UP000007727">
    <property type="component" value="Chromosome"/>
</dbReference>
<dbReference type="GO" id="GO:0005829">
    <property type="term" value="C:cytosol"/>
    <property type="evidence" value="ECO:0007669"/>
    <property type="project" value="TreeGrafter"/>
</dbReference>
<dbReference type="GO" id="GO:0000287">
    <property type="term" value="F:magnesium ion binding"/>
    <property type="evidence" value="ECO:0007669"/>
    <property type="project" value="UniProtKB-UniRule"/>
</dbReference>
<dbReference type="GO" id="GO:0008966">
    <property type="term" value="F:phosphoglucosamine mutase activity"/>
    <property type="evidence" value="ECO:0007669"/>
    <property type="project" value="UniProtKB-UniRule"/>
</dbReference>
<dbReference type="GO" id="GO:0004615">
    <property type="term" value="F:phosphomannomutase activity"/>
    <property type="evidence" value="ECO:0007669"/>
    <property type="project" value="TreeGrafter"/>
</dbReference>
<dbReference type="GO" id="GO:0005975">
    <property type="term" value="P:carbohydrate metabolic process"/>
    <property type="evidence" value="ECO:0007669"/>
    <property type="project" value="InterPro"/>
</dbReference>
<dbReference type="GO" id="GO:0009252">
    <property type="term" value="P:peptidoglycan biosynthetic process"/>
    <property type="evidence" value="ECO:0007669"/>
    <property type="project" value="TreeGrafter"/>
</dbReference>
<dbReference type="GO" id="GO:0006048">
    <property type="term" value="P:UDP-N-acetylglucosamine biosynthetic process"/>
    <property type="evidence" value="ECO:0007669"/>
    <property type="project" value="TreeGrafter"/>
</dbReference>
<dbReference type="CDD" id="cd05802">
    <property type="entry name" value="GlmM"/>
    <property type="match status" value="1"/>
</dbReference>
<dbReference type="FunFam" id="3.40.120.10:FF:000001">
    <property type="entry name" value="Phosphoglucosamine mutase"/>
    <property type="match status" value="1"/>
</dbReference>
<dbReference type="FunFam" id="3.40.120.10:FF:000003">
    <property type="entry name" value="Phosphoglucosamine mutase"/>
    <property type="match status" value="1"/>
</dbReference>
<dbReference type="Gene3D" id="3.40.120.10">
    <property type="entry name" value="Alpha-D-Glucose-1,6-Bisphosphate, subunit A, domain 3"/>
    <property type="match status" value="3"/>
</dbReference>
<dbReference type="Gene3D" id="3.30.310.50">
    <property type="entry name" value="Alpha-D-phosphohexomutase, C-terminal domain"/>
    <property type="match status" value="1"/>
</dbReference>
<dbReference type="HAMAP" id="MF_01554_B">
    <property type="entry name" value="GlmM_B"/>
    <property type="match status" value="1"/>
</dbReference>
<dbReference type="InterPro" id="IPR005844">
    <property type="entry name" value="A-D-PHexomutase_a/b/a-I"/>
</dbReference>
<dbReference type="InterPro" id="IPR016055">
    <property type="entry name" value="A-D-PHexomutase_a/b/a-I/II/III"/>
</dbReference>
<dbReference type="InterPro" id="IPR005845">
    <property type="entry name" value="A-D-PHexomutase_a/b/a-II"/>
</dbReference>
<dbReference type="InterPro" id="IPR005846">
    <property type="entry name" value="A-D-PHexomutase_a/b/a-III"/>
</dbReference>
<dbReference type="InterPro" id="IPR036900">
    <property type="entry name" value="A-D-PHexomutase_C_sf"/>
</dbReference>
<dbReference type="InterPro" id="IPR016066">
    <property type="entry name" value="A-D-PHexomutase_CS"/>
</dbReference>
<dbReference type="InterPro" id="IPR005841">
    <property type="entry name" value="Alpha-D-phosphohexomutase_SF"/>
</dbReference>
<dbReference type="InterPro" id="IPR006352">
    <property type="entry name" value="GlmM_bact"/>
</dbReference>
<dbReference type="InterPro" id="IPR050060">
    <property type="entry name" value="Phosphoglucosamine_mutase"/>
</dbReference>
<dbReference type="NCBIfam" id="TIGR01455">
    <property type="entry name" value="glmM"/>
    <property type="match status" value="1"/>
</dbReference>
<dbReference type="PANTHER" id="PTHR42946:SF1">
    <property type="entry name" value="PHOSPHOGLUCOMUTASE (ALPHA-D-GLUCOSE-1,6-BISPHOSPHATE-DEPENDENT)"/>
    <property type="match status" value="1"/>
</dbReference>
<dbReference type="PANTHER" id="PTHR42946">
    <property type="entry name" value="PHOSPHOHEXOSE MUTASE"/>
    <property type="match status" value="1"/>
</dbReference>
<dbReference type="Pfam" id="PF02878">
    <property type="entry name" value="PGM_PMM_I"/>
    <property type="match status" value="1"/>
</dbReference>
<dbReference type="Pfam" id="PF02879">
    <property type="entry name" value="PGM_PMM_II"/>
    <property type="match status" value="1"/>
</dbReference>
<dbReference type="Pfam" id="PF02880">
    <property type="entry name" value="PGM_PMM_III"/>
    <property type="match status" value="1"/>
</dbReference>
<dbReference type="PRINTS" id="PR00509">
    <property type="entry name" value="PGMPMM"/>
</dbReference>
<dbReference type="SUPFAM" id="SSF55957">
    <property type="entry name" value="Phosphoglucomutase, C-terminal domain"/>
    <property type="match status" value="1"/>
</dbReference>
<dbReference type="SUPFAM" id="SSF53738">
    <property type="entry name" value="Phosphoglucomutase, first 3 domains"/>
    <property type="match status" value="3"/>
</dbReference>
<dbReference type="PROSITE" id="PS00710">
    <property type="entry name" value="PGM_PMM"/>
    <property type="match status" value="1"/>
</dbReference>
<organism>
    <name type="scientific">Campylobacter lari (strain RM2100 / D67 / ATCC BAA-1060)</name>
    <dbReference type="NCBI Taxonomy" id="306263"/>
    <lineage>
        <taxon>Bacteria</taxon>
        <taxon>Pseudomonadati</taxon>
        <taxon>Campylobacterota</taxon>
        <taxon>Epsilonproteobacteria</taxon>
        <taxon>Campylobacterales</taxon>
        <taxon>Campylobacteraceae</taxon>
        <taxon>Campylobacter</taxon>
    </lineage>
</organism>
<feature type="chain" id="PRO_1000185357" description="Phosphoglucosamine mutase">
    <location>
        <begin position="1"/>
        <end position="445"/>
    </location>
</feature>
<feature type="active site" description="Phosphoserine intermediate" evidence="1">
    <location>
        <position position="99"/>
    </location>
</feature>
<feature type="binding site" description="via phosphate group" evidence="1">
    <location>
        <position position="99"/>
    </location>
    <ligand>
        <name>Mg(2+)</name>
        <dbReference type="ChEBI" id="CHEBI:18420"/>
    </ligand>
</feature>
<feature type="binding site" evidence="1">
    <location>
        <position position="242"/>
    </location>
    <ligand>
        <name>Mg(2+)</name>
        <dbReference type="ChEBI" id="CHEBI:18420"/>
    </ligand>
</feature>
<feature type="binding site" evidence="1">
    <location>
        <position position="244"/>
    </location>
    <ligand>
        <name>Mg(2+)</name>
        <dbReference type="ChEBI" id="CHEBI:18420"/>
    </ligand>
</feature>
<feature type="binding site" evidence="1">
    <location>
        <position position="246"/>
    </location>
    <ligand>
        <name>Mg(2+)</name>
        <dbReference type="ChEBI" id="CHEBI:18420"/>
    </ligand>
</feature>
<feature type="modified residue" description="Phosphoserine" evidence="1">
    <location>
        <position position="99"/>
    </location>
</feature>
<accession>B9KE78</accession>
<reference key="1">
    <citation type="journal article" date="2008" name="Foodborne Pathog. Dis.">
        <title>The complete genome sequence and analysis of the human pathogen Campylobacter lari.</title>
        <authorList>
            <person name="Miller W.G."/>
            <person name="Wang G."/>
            <person name="Binnewies T.T."/>
            <person name="Parker C.T."/>
        </authorList>
    </citation>
    <scope>NUCLEOTIDE SEQUENCE [LARGE SCALE GENOMIC DNA]</scope>
    <source>
        <strain>RM2100 / D67 / ATCC BAA-1060</strain>
    </source>
</reference>